<protein>
    <recommendedName>
        <fullName evidence="5">Ubiquitin-conjugating enzyme E2 B</fullName>
        <ecNumber evidence="1">2.3.2.23</ecNumber>
    </recommendedName>
    <alternativeName>
        <fullName>E2 ubiquitin-conjugating enzyme B</fullName>
    </alternativeName>
    <alternativeName>
        <fullName>Ubiquitin carrier protein B</fullName>
    </alternativeName>
    <alternativeName>
        <fullName>Ubiquitin-protein ligase B</fullName>
    </alternativeName>
</protein>
<keyword id="KW-0067">ATP-binding</keyword>
<keyword id="KW-1003">Cell membrane</keyword>
<keyword id="KW-0227">DNA damage</keyword>
<keyword id="KW-0234">DNA repair</keyword>
<keyword id="KW-0472">Membrane</keyword>
<keyword id="KW-0547">Nucleotide-binding</keyword>
<keyword id="KW-0539">Nucleus</keyword>
<keyword id="KW-1185">Reference proteome</keyword>
<keyword id="KW-0808">Transferase</keyword>
<keyword id="KW-0833">Ubl conjugation pathway</keyword>
<name>UBE2B_BOVIN</name>
<sequence length="152" mass="17312">MSTPARRRLMRDFKRLQEDPPVGVSGAPSENNIMQWNAVIFGPEGTPFEDGTFKLVIEFSEEYPNKPPTVRFLSKMFHPNVYADGSICLDILQNRWSPTYDVSSILTSIQSLLDEPNPNSPANSQAAQLYQENKREYEKRVSAIVEQSWNDS</sequence>
<gene>
    <name type="primary">UBE2B</name>
</gene>
<accession>Q32P99</accession>
<dbReference type="EC" id="2.3.2.23" evidence="1"/>
<dbReference type="EMBL" id="BC108202">
    <property type="protein sequence ID" value="AAI08203.1"/>
    <property type="molecule type" value="mRNA"/>
</dbReference>
<dbReference type="RefSeq" id="NP_001032536.1">
    <property type="nucleotide sequence ID" value="NM_001037459.2"/>
</dbReference>
<dbReference type="BMRB" id="Q32P99"/>
<dbReference type="SMR" id="Q32P99"/>
<dbReference type="FunCoup" id="Q32P99">
    <property type="interactions" value="2614"/>
</dbReference>
<dbReference type="STRING" id="9913.ENSBTAP00000040823"/>
<dbReference type="PaxDb" id="9913-ENSBTAP00000040823"/>
<dbReference type="Ensembl" id="ENSBTAT00000043235.2">
    <property type="protein sequence ID" value="ENSBTAP00000040823.1"/>
    <property type="gene ID" value="ENSBTAG00000010982.7"/>
</dbReference>
<dbReference type="GeneID" id="512207"/>
<dbReference type="KEGG" id="bta:512207"/>
<dbReference type="CTD" id="7320"/>
<dbReference type="VEuPathDB" id="HostDB:ENSBTAG00000010982"/>
<dbReference type="VGNC" id="VGNC:36577">
    <property type="gene designation" value="UBE2B"/>
</dbReference>
<dbReference type="eggNOG" id="KOG0419">
    <property type="taxonomic scope" value="Eukaryota"/>
</dbReference>
<dbReference type="GeneTree" id="ENSGT00940000156580"/>
<dbReference type="HOGENOM" id="CLU_030988_10_2_1"/>
<dbReference type="InParanoid" id="Q32P99"/>
<dbReference type="OMA" id="MMYCHAI"/>
<dbReference type="OrthoDB" id="9984419at2759"/>
<dbReference type="TreeFam" id="TF101128"/>
<dbReference type="Reactome" id="R-BTA-110314">
    <property type="pathway name" value="Recognition of DNA damage by PCNA-containing replication complex"/>
</dbReference>
<dbReference type="Reactome" id="R-BTA-8866652">
    <property type="pathway name" value="Synthesis of active ubiquitin: roles of E1 and E2 enzymes"/>
</dbReference>
<dbReference type="Reactome" id="R-BTA-8866654">
    <property type="pathway name" value="E3 ubiquitin ligases ubiquitinate target proteins"/>
</dbReference>
<dbReference type="Reactome" id="R-BTA-983168">
    <property type="pathway name" value="Antigen processing: Ubiquitination &amp; Proteasome degradation"/>
</dbReference>
<dbReference type="UniPathway" id="UPA00143"/>
<dbReference type="Proteomes" id="UP000009136">
    <property type="component" value="Chromosome 7"/>
</dbReference>
<dbReference type="Bgee" id="ENSBTAG00000010982">
    <property type="expression patterns" value="Expressed in semitendinosus and 103 other cell types or tissues"/>
</dbReference>
<dbReference type="GO" id="GO:0033503">
    <property type="term" value="C:HULC complex"/>
    <property type="evidence" value="ECO:0000250"/>
    <property type="project" value="UniProtKB"/>
</dbReference>
<dbReference type="GO" id="GO:0005634">
    <property type="term" value="C:nucleus"/>
    <property type="evidence" value="ECO:0007669"/>
    <property type="project" value="UniProtKB-SubCell"/>
</dbReference>
<dbReference type="GO" id="GO:0005886">
    <property type="term" value="C:plasma membrane"/>
    <property type="evidence" value="ECO:0007669"/>
    <property type="project" value="UniProtKB-SubCell"/>
</dbReference>
<dbReference type="GO" id="GO:0005524">
    <property type="term" value="F:ATP binding"/>
    <property type="evidence" value="ECO:0007669"/>
    <property type="project" value="UniProtKB-KW"/>
</dbReference>
<dbReference type="GO" id="GO:0061631">
    <property type="term" value="F:ubiquitin conjugating enzyme activity"/>
    <property type="evidence" value="ECO:0000318"/>
    <property type="project" value="GO_Central"/>
</dbReference>
<dbReference type="GO" id="GO:0004842">
    <property type="term" value="F:ubiquitin-protein transferase activity"/>
    <property type="evidence" value="ECO:0000250"/>
    <property type="project" value="UniProtKB"/>
</dbReference>
<dbReference type="GO" id="GO:0006281">
    <property type="term" value="P:DNA repair"/>
    <property type="evidence" value="ECO:0000318"/>
    <property type="project" value="GO_Central"/>
</dbReference>
<dbReference type="GO" id="GO:0043161">
    <property type="term" value="P:proteasome-mediated ubiquitin-dependent protein catabolic process"/>
    <property type="evidence" value="ECO:0000318"/>
    <property type="project" value="GO_Central"/>
</dbReference>
<dbReference type="GO" id="GO:0070979">
    <property type="term" value="P:protein K11-linked ubiquitination"/>
    <property type="evidence" value="ECO:0000250"/>
    <property type="project" value="UniProtKB"/>
</dbReference>
<dbReference type="GO" id="GO:0070936">
    <property type="term" value="P:protein K48-linked ubiquitination"/>
    <property type="evidence" value="ECO:0000250"/>
    <property type="project" value="UniProtKB"/>
</dbReference>
<dbReference type="GO" id="GO:0070534">
    <property type="term" value="P:protein K63-linked ubiquitination"/>
    <property type="evidence" value="ECO:0000250"/>
    <property type="project" value="UniProtKB"/>
</dbReference>
<dbReference type="GO" id="GO:0000209">
    <property type="term" value="P:protein polyubiquitination"/>
    <property type="evidence" value="ECO:0000318"/>
    <property type="project" value="GO_Central"/>
</dbReference>
<dbReference type="CDD" id="cd23790">
    <property type="entry name" value="UBCc_UBE2A_2B"/>
    <property type="match status" value="1"/>
</dbReference>
<dbReference type="FunFam" id="3.10.110.10:FF:000062">
    <property type="entry name" value="Ubiquitin-conjugating enzyme E2 B"/>
    <property type="match status" value="1"/>
</dbReference>
<dbReference type="Gene3D" id="3.10.110.10">
    <property type="entry name" value="Ubiquitin Conjugating Enzyme"/>
    <property type="match status" value="1"/>
</dbReference>
<dbReference type="InterPro" id="IPR050113">
    <property type="entry name" value="Ub_conjugating_enzyme"/>
</dbReference>
<dbReference type="InterPro" id="IPR000608">
    <property type="entry name" value="UBQ-conjugat_E2_core"/>
</dbReference>
<dbReference type="InterPro" id="IPR023313">
    <property type="entry name" value="UBQ-conjugating_AS"/>
</dbReference>
<dbReference type="InterPro" id="IPR016135">
    <property type="entry name" value="UBQ-conjugating_enzyme/RWD"/>
</dbReference>
<dbReference type="PANTHER" id="PTHR24067">
    <property type="entry name" value="UBIQUITIN-CONJUGATING ENZYME E2"/>
    <property type="match status" value="1"/>
</dbReference>
<dbReference type="Pfam" id="PF00179">
    <property type="entry name" value="UQ_con"/>
    <property type="match status" value="1"/>
</dbReference>
<dbReference type="SMART" id="SM00212">
    <property type="entry name" value="UBCc"/>
    <property type="match status" value="1"/>
</dbReference>
<dbReference type="SUPFAM" id="SSF54495">
    <property type="entry name" value="UBC-like"/>
    <property type="match status" value="1"/>
</dbReference>
<dbReference type="PROSITE" id="PS00183">
    <property type="entry name" value="UBC_1"/>
    <property type="match status" value="1"/>
</dbReference>
<dbReference type="PROSITE" id="PS50127">
    <property type="entry name" value="UBC_2"/>
    <property type="match status" value="1"/>
</dbReference>
<evidence type="ECO:0000250" key="1">
    <source>
        <dbReference type="UniProtKB" id="P63146"/>
    </source>
</evidence>
<evidence type="ECO:0000250" key="2">
    <source>
        <dbReference type="UniProtKB" id="P63149"/>
    </source>
</evidence>
<evidence type="ECO:0000255" key="3">
    <source>
        <dbReference type="PROSITE-ProRule" id="PRU00388"/>
    </source>
</evidence>
<evidence type="ECO:0000255" key="4">
    <source>
        <dbReference type="PROSITE-ProRule" id="PRU10133"/>
    </source>
</evidence>
<evidence type="ECO:0000305" key="5"/>
<comment type="function">
    <text evidence="1 2">E2 ubiquitin-conjugating enzyme that accepts ubiquitin from the ubiquitin-activating enzyme E1 and transfers it to a E3 ubiquitin-protein ligase (By similarity). In vitro catalyzes 'Lys-11'-, as well as 'Lys-48'- and 'Lys-63'-linked polyubiquitination (By similarity). Together with the E3 enzyme BRE1 (RNF20 and/or RNF40), plays a role in transcription regulation by catalyzing the monoubiquitination of histone H2B at 'Lys-120' to form H2BK120ub1 (By similarity). H2BK120ub1 gives a specific tag for epigenetic transcriptional activation, elongation by RNA polymerase II, telomeric silencing, and is also a prerequisite for H3K4me and H3K79me formation (By similarity). May play a role in DNA repair (By similarity). Associates to the E3 ligase RAD18 to form the UBE2B-RAD18 ubiquitin ligase complex involved in mono-ubiquitination of DNA-associated PCNA on 'Lys-164' (By similarity). In association with the E3 enzyme UBR4, is involved in N-end rule-dependent protein degradation (By similarity). May be involved in neurite outgrowth (By similarity).</text>
</comment>
<comment type="catalytic activity">
    <reaction evidence="1 3 4">
        <text>S-ubiquitinyl-[E1 ubiquitin-activating enzyme]-L-cysteine + [E2 ubiquitin-conjugating enzyme]-L-cysteine = [E1 ubiquitin-activating enzyme]-L-cysteine + S-ubiquitinyl-[E2 ubiquitin-conjugating enzyme]-L-cysteine.</text>
        <dbReference type="EC" id="2.3.2.23"/>
    </reaction>
</comment>
<comment type="pathway">
    <text evidence="1 3">Protein modification; protein ubiquitination.</text>
</comment>
<comment type="subunit">
    <text evidence="1">Interacts with RAD18, UBR2 and WAC.</text>
</comment>
<comment type="subcellular location">
    <subcellularLocation>
        <location evidence="2">Cell membrane</location>
    </subcellularLocation>
    <subcellularLocation>
        <location evidence="2">Nucleus</location>
    </subcellularLocation>
    <text evidence="2">In peripheral neurons, expressed both at the plasma membrane and in nuclei.</text>
</comment>
<comment type="similarity">
    <text evidence="3">Belongs to the ubiquitin-conjugating enzyme family.</text>
</comment>
<reference key="1">
    <citation type="submission" date="2005-10" db="EMBL/GenBank/DDBJ databases">
        <authorList>
            <consortium name="NIH - Mammalian Gene Collection (MGC) project"/>
        </authorList>
    </citation>
    <scope>NUCLEOTIDE SEQUENCE [LARGE SCALE MRNA]</scope>
    <source>
        <strain>Crossbred X Angus</strain>
        <tissue>Liver</tissue>
    </source>
</reference>
<proteinExistence type="evidence at transcript level"/>
<organism>
    <name type="scientific">Bos taurus</name>
    <name type="common">Bovine</name>
    <dbReference type="NCBI Taxonomy" id="9913"/>
    <lineage>
        <taxon>Eukaryota</taxon>
        <taxon>Metazoa</taxon>
        <taxon>Chordata</taxon>
        <taxon>Craniata</taxon>
        <taxon>Vertebrata</taxon>
        <taxon>Euteleostomi</taxon>
        <taxon>Mammalia</taxon>
        <taxon>Eutheria</taxon>
        <taxon>Laurasiatheria</taxon>
        <taxon>Artiodactyla</taxon>
        <taxon>Ruminantia</taxon>
        <taxon>Pecora</taxon>
        <taxon>Bovidae</taxon>
        <taxon>Bovinae</taxon>
        <taxon>Bos</taxon>
    </lineage>
</organism>
<feature type="chain" id="PRO_0000239456" description="Ubiquitin-conjugating enzyme E2 B">
    <location>
        <begin position="1"/>
        <end position="152"/>
    </location>
</feature>
<feature type="domain" description="UBC core" evidence="3">
    <location>
        <begin position="4"/>
        <end position="150"/>
    </location>
</feature>
<feature type="active site" description="Glycyl thioester intermediate" evidence="3 4">
    <location>
        <position position="88"/>
    </location>
</feature>